<protein>
    <recommendedName>
        <fullName evidence="1">Ion-translocating oxidoreductase complex subunit C</fullName>
        <ecNumber evidence="1">7.-.-.-</ecNumber>
    </recommendedName>
    <alternativeName>
        <fullName evidence="1">Rsx electron transport complex subunit C</fullName>
    </alternativeName>
</protein>
<keyword id="KW-0004">4Fe-4S</keyword>
<keyword id="KW-0997">Cell inner membrane</keyword>
<keyword id="KW-1003">Cell membrane</keyword>
<keyword id="KW-0249">Electron transport</keyword>
<keyword id="KW-0408">Iron</keyword>
<keyword id="KW-0411">Iron-sulfur</keyword>
<keyword id="KW-0472">Membrane</keyword>
<keyword id="KW-0479">Metal-binding</keyword>
<keyword id="KW-1185">Reference proteome</keyword>
<keyword id="KW-0677">Repeat</keyword>
<keyword id="KW-1278">Translocase</keyword>
<keyword id="KW-0813">Transport</keyword>
<sequence>MLKLFSAFRKNKIWDFNGGIHPPEMKTQSNGTPLRQVPLAQRFVIPLKQHIGAEGELCVSVGDKVLRGQPLTRGHGKMLPVHAPTSGTVTAIAPHSTAHPSALAELSVIIDADGEDCWIPRDGWADYRTRSREELIERIHQFGVAGLGGAGFPTGVKLQGGGDKIETLIINAAECEPYITADDRLMQDCAAQVVEGIRILAHILQPREILIGIEDNKPQAISMLRAVLADSNDISLRVIPTKYPSGGAKQLTYILTGKQVPHGGRSSDIGVLMQNVGTAYAVKRAVIDGEPITERVVTLTGEAIARPGNVWARLGTPVRHLLNDAGFCPSADQMVIMGGPLMGFTLPWLDVPVVKITNCLLAPSANELGEPQEEQSCIRCSACADACPADLLPQQLYWFSKGQQHDKATTHNIADCIECGACAWVCPSNIPLVQYFRQEKAEIAAIRQEEKRAAEAKARFEARQARLEREKAARLERHKSAAVQPAAKDKDAIAAALARVKEKQAQATQPIVIKAGERPDNSAIIAAREARKAQARAKQAELQQTNDAATVADPRKTAVEAAIARAKARKLEQQQANAEPEEQVDPRKAAVEAAIARAKARKLEQQQANAEPEEQVDPRKAAVEAAIARAKARKLEQQQSNAEPEEQVDPRKAAVEAAIARAKARKLEQQQANAEPEEQVDPRKAAVEAAIARAKARKLEQQQTNAEPEEQVDPRKAAVAAAIARAQAKKAAQQKVVNED</sequence>
<gene>
    <name evidence="1" type="primary">rsxC</name>
    <name type="synonym">rnfC</name>
    <name type="ordered locus">EcE24377A_1837</name>
</gene>
<proteinExistence type="inferred from homology"/>
<comment type="function">
    <text evidence="1">Part of a membrane-bound complex that couples electron transfer with translocation of ions across the membrane. Required to maintain the reduced state of SoxR.</text>
</comment>
<comment type="cofactor">
    <cofactor evidence="1">
        <name>[4Fe-4S] cluster</name>
        <dbReference type="ChEBI" id="CHEBI:49883"/>
    </cofactor>
    <text evidence="1">Binds 2 [4Fe-4S] clusters per subunit.</text>
</comment>
<comment type="subunit">
    <text evidence="1">The complex is composed of six subunits: RsxA, RsxB, RsxC, RsxD, RsxE and RsxG.</text>
</comment>
<comment type="subcellular location">
    <subcellularLocation>
        <location evidence="1">Cell inner membrane</location>
        <topology evidence="1">Peripheral membrane protein</topology>
    </subcellularLocation>
</comment>
<comment type="similarity">
    <text evidence="1">Belongs to the 4Fe4S bacterial-type ferredoxin family. RnfC subfamily.</text>
</comment>
<organism>
    <name type="scientific">Escherichia coli O139:H28 (strain E24377A / ETEC)</name>
    <dbReference type="NCBI Taxonomy" id="331111"/>
    <lineage>
        <taxon>Bacteria</taxon>
        <taxon>Pseudomonadati</taxon>
        <taxon>Pseudomonadota</taxon>
        <taxon>Gammaproteobacteria</taxon>
        <taxon>Enterobacterales</taxon>
        <taxon>Enterobacteriaceae</taxon>
        <taxon>Escherichia</taxon>
    </lineage>
</organism>
<evidence type="ECO:0000255" key="1">
    <source>
        <dbReference type="HAMAP-Rule" id="MF_00461"/>
    </source>
</evidence>
<evidence type="ECO:0000256" key="2">
    <source>
        <dbReference type="SAM" id="MobiDB-lite"/>
    </source>
</evidence>
<name>RSXC_ECO24</name>
<dbReference type="EC" id="7.-.-.-" evidence="1"/>
<dbReference type="EMBL" id="CP000800">
    <property type="protein sequence ID" value="ABV19695.1"/>
    <property type="molecule type" value="Genomic_DNA"/>
</dbReference>
<dbReference type="RefSeq" id="WP_000915684.1">
    <property type="nucleotide sequence ID" value="NC_009801.1"/>
</dbReference>
<dbReference type="SMR" id="A7ZM89"/>
<dbReference type="KEGG" id="ecw:EcE24377A_1837"/>
<dbReference type="HOGENOM" id="CLU_010808_2_1_6"/>
<dbReference type="Proteomes" id="UP000001122">
    <property type="component" value="Chromosome"/>
</dbReference>
<dbReference type="GO" id="GO:0005886">
    <property type="term" value="C:plasma membrane"/>
    <property type="evidence" value="ECO:0007669"/>
    <property type="project" value="UniProtKB-SubCell"/>
</dbReference>
<dbReference type="GO" id="GO:0051539">
    <property type="term" value="F:4 iron, 4 sulfur cluster binding"/>
    <property type="evidence" value="ECO:0007669"/>
    <property type="project" value="UniProtKB-KW"/>
</dbReference>
<dbReference type="GO" id="GO:0009055">
    <property type="term" value="F:electron transfer activity"/>
    <property type="evidence" value="ECO:0007669"/>
    <property type="project" value="InterPro"/>
</dbReference>
<dbReference type="GO" id="GO:0046872">
    <property type="term" value="F:metal ion binding"/>
    <property type="evidence" value="ECO:0007669"/>
    <property type="project" value="UniProtKB-KW"/>
</dbReference>
<dbReference type="GO" id="GO:0022900">
    <property type="term" value="P:electron transport chain"/>
    <property type="evidence" value="ECO:0007669"/>
    <property type="project" value="UniProtKB-UniRule"/>
</dbReference>
<dbReference type="Gene3D" id="3.30.70.20">
    <property type="match status" value="1"/>
</dbReference>
<dbReference type="Gene3D" id="3.40.50.11540">
    <property type="entry name" value="NADH-ubiquinone oxidoreductase 51kDa subunit"/>
    <property type="match status" value="1"/>
</dbReference>
<dbReference type="HAMAP" id="MF_00461">
    <property type="entry name" value="RsxC_RnfC"/>
    <property type="match status" value="1"/>
</dbReference>
<dbReference type="InterPro" id="IPR017896">
    <property type="entry name" value="4Fe4S_Fe-S-bd"/>
</dbReference>
<dbReference type="InterPro" id="IPR017900">
    <property type="entry name" value="4Fe4S_Fe_S_CS"/>
</dbReference>
<dbReference type="InterPro" id="IPR010208">
    <property type="entry name" value="Ion_transpt_RnfC/RsxC"/>
</dbReference>
<dbReference type="InterPro" id="IPR011538">
    <property type="entry name" value="Nuo51_FMN-bd"/>
</dbReference>
<dbReference type="InterPro" id="IPR037225">
    <property type="entry name" value="Nuo51_FMN-bd_sf"/>
</dbReference>
<dbReference type="InterPro" id="IPR026902">
    <property type="entry name" value="RnfC_N"/>
</dbReference>
<dbReference type="InterPro" id="IPR019554">
    <property type="entry name" value="Soluble_ligand-bd"/>
</dbReference>
<dbReference type="NCBIfam" id="NF003454">
    <property type="entry name" value="PRK05035.1"/>
    <property type="match status" value="1"/>
</dbReference>
<dbReference type="NCBIfam" id="TIGR01945">
    <property type="entry name" value="rnfC"/>
    <property type="match status" value="1"/>
</dbReference>
<dbReference type="PANTHER" id="PTHR43034">
    <property type="entry name" value="ION-TRANSLOCATING OXIDOREDUCTASE COMPLEX SUBUNIT C"/>
    <property type="match status" value="1"/>
</dbReference>
<dbReference type="PANTHER" id="PTHR43034:SF2">
    <property type="entry name" value="ION-TRANSLOCATING OXIDOREDUCTASE COMPLEX SUBUNIT C"/>
    <property type="match status" value="1"/>
</dbReference>
<dbReference type="Pfam" id="PF01512">
    <property type="entry name" value="Complex1_51K"/>
    <property type="match status" value="1"/>
</dbReference>
<dbReference type="Pfam" id="PF12838">
    <property type="entry name" value="Fer4_7"/>
    <property type="match status" value="1"/>
</dbReference>
<dbReference type="Pfam" id="PF13375">
    <property type="entry name" value="RnfC_N"/>
    <property type="match status" value="1"/>
</dbReference>
<dbReference type="Pfam" id="PF10531">
    <property type="entry name" value="SLBB"/>
    <property type="match status" value="1"/>
</dbReference>
<dbReference type="SUPFAM" id="SSF46548">
    <property type="entry name" value="alpha-helical ferredoxin"/>
    <property type="match status" value="1"/>
</dbReference>
<dbReference type="SUPFAM" id="SSF142019">
    <property type="entry name" value="Nqo1 FMN-binding domain-like"/>
    <property type="match status" value="1"/>
</dbReference>
<dbReference type="PROSITE" id="PS00198">
    <property type="entry name" value="4FE4S_FER_1"/>
    <property type="match status" value="2"/>
</dbReference>
<dbReference type="PROSITE" id="PS51379">
    <property type="entry name" value="4FE4S_FER_2"/>
    <property type="match status" value="2"/>
</dbReference>
<accession>A7ZM89</accession>
<feature type="chain" id="PRO_1000060338" description="Ion-translocating oxidoreductase complex subunit C">
    <location>
        <begin position="1"/>
        <end position="740"/>
    </location>
</feature>
<feature type="domain" description="4Fe-4S ferredoxin-type 1" evidence="1">
    <location>
        <begin position="369"/>
        <end position="397"/>
    </location>
</feature>
<feature type="domain" description="4Fe-4S ferredoxin-type 2" evidence="1">
    <location>
        <begin position="407"/>
        <end position="436"/>
    </location>
</feature>
<feature type="region of interest" description="Disordered" evidence="2">
    <location>
        <begin position="602"/>
        <end position="716"/>
    </location>
</feature>
<feature type="binding site" evidence="1">
    <location>
        <position position="377"/>
    </location>
    <ligand>
        <name>[4Fe-4S] cluster</name>
        <dbReference type="ChEBI" id="CHEBI:49883"/>
        <label>1</label>
    </ligand>
</feature>
<feature type="binding site" evidence="1">
    <location>
        <position position="380"/>
    </location>
    <ligand>
        <name>[4Fe-4S] cluster</name>
        <dbReference type="ChEBI" id="CHEBI:49883"/>
        <label>1</label>
    </ligand>
</feature>
<feature type="binding site" evidence="1">
    <location>
        <position position="383"/>
    </location>
    <ligand>
        <name>[4Fe-4S] cluster</name>
        <dbReference type="ChEBI" id="CHEBI:49883"/>
        <label>1</label>
    </ligand>
</feature>
<feature type="binding site" evidence="1">
    <location>
        <position position="387"/>
    </location>
    <ligand>
        <name>[4Fe-4S] cluster</name>
        <dbReference type="ChEBI" id="CHEBI:49883"/>
        <label>2</label>
    </ligand>
</feature>
<feature type="binding site" evidence="1">
    <location>
        <position position="416"/>
    </location>
    <ligand>
        <name>[4Fe-4S] cluster</name>
        <dbReference type="ChEBI" id="CHEBI:49883"/>
        <label>2</label>
    </ligand>
</feature>
<feature type="binding site" evidence="1">
    <location>
        <position position="419"/>
    </location>
    <ligand>
        <name>[4Fe-4S] cluster</name>
        <dbReference type="ChEBI" id="CHEBI:49883"/>
        <label>2</label>
    </ligand>
</feature>
<feature type="binding site" evidence="1">
    <location>
        <position position="422"/>
    </location>
    <ligand>
        <name>[4Fe-4S] cluster</name>
        <dbReference type="ChEBI" id="CHEBI:49883"/>
        <label>2</label>
    </ligand>
</feature>
<feature type="binding site" evidence="1">
    <location>
        <position position="426"/>
    </location>
    <ligand>
        <name>[4Fe-4S] cluster</name>
        <dbReference type="ChEBI" id="CHEBI:49883"/>
        <label>1</label>
    </ligand>
</feature>
<reference key="1">
    <citation type="journal article" date="2008" name="J. Bacteriol.">
        <title>The pangenome structure of Escherichia coli: comparative genomic analysis of E. coli commensal and pathogenic isolates.</title>
        <authorList>
            <person name="Rasko D.A."/>
            <person name="Rosovitz M.J."/>
            <person name="Myers G.S.A."/>
            <person name="Mongodin E.F."/>
            <person name="Fricke W.F."/>
            <person name="Gajer P."/>
            <person name="Crabtree J."/>
            <person name="Sebaihia M."/>
            <person name="Thomson N.R."/>
            <person name="Chaudhuri R."/>
            <person name="Henderson I.R."/>
            <person name="Sperandio V."/>
            <person name="Ravel J."/>
        </authorList>
    </citation>
    <scope>NUCLEOTIDE SEQUENCE [LARGE SCALE GENOMIC DNA]</scope>
    <source>
        <strain>E24377A / ETEC</strain>
    </source>
</reference>